<feature type="chain" id="PRO_0000107387" description="Uncharacterized protein MJ1516">
    <location>
        <begin position="1"/>
        <end position="99"/>
    </location>
</feature>
<feature type="transmembrane region" description="Helical" evidence="1">
    <location>
        <begin position="34"/>
        <end position="54"/>
    </location>
</feature>
<feature type="transmembrane region" description="Helical" evidence="1">
    <location>
        <begin position="56"/>
        <end position="76"/>
    </location>
</feature>
<feature type="domain" description="TM2" evidence="1">
    <location>
        <begin position="32"/>
        <end position="79"/>
    </location>
</feature>
<name>Y1516_METJA</name>
<gene>
    <name type="ordered locus">MJ1516</name>
</gene>
<keyword id="KW-1003">Cell membrane</keyword>
<keyword id="KW-0472">Membrane</keyword>
<keyword id="KW-1185">Reference proteome</keyword>
<keyword id="KW-0812">Transmembrane</keyword>
<keyword id="KW-1133">Transmembrane helix</keyword>
<proteinExistence type="predicted"/>
<dbReference type="EMBL" id="L77117">
    <property type="protein sequence ID" value="AAB99536.1"/>
    <property type="molecule type" value="Genomic_DNA"/>
</dbReference>
<dbReference type="PIR" id="C64489">
    <property type="entry name" value="C64489"/>
</dbReference>
<dbReference type="STRING" id="243232.MJ_1516"/>
<dbReference type="PaxDb" id="243232-MJ_1516"/>
<dbReference type="EnsemblBacteria" id="AAB99536">
    <property type="protein sequence ID" value="AAB99536"/>
    <property type="gene ID" value="MJ_1516"/>
</dbReference>
<dbReference type="KEGG" id="mja:MJ_1516"/>
<dbReference type="eggNOG" id="arCOG03293">
    <property type="taxonomic scope" value="Archaea"/>
</dbReference>
<dbReference type="HOGENOM" id="CLU_2285050_0_0_2"/>
<dbReference type="InParanoid" id="Q58911"/>
<dbReference type="Proteomes" id="UP000000805">
    <property type="component" value="Chromosome"/>
</dbReference>
<dbReference type="GO" id="GO:0005886">
    <property type="term" value="C:plasma membrane"/>
    <property type="evidence" value="ECO:0007669"/>
    <property type="project" value="UniProtKB-SubCell"/>
</dbReference>
<dbReference type="InterPro" id="IPR007829">
    <property type="entry name" value="TM2"/>
</dbReference>
<dbReference type="Pfam" id="PF05154">
    <property type="entry name" value="TM2"/>
    <property type="match status" value="1"/>
</dbReference>
<organism>
    <name type="scientific">Methanocaldococcus jannaschii (strain ATCC 43067 / DSM 2661 / JAL-1 / JCM 10045 / NBRC 100440)</name>
    <name type="common">Methanococcus jannaschii</name>
    <dbReference type="NCBI Taxonomy" id="243232"/>
    <lineage>
        <taxon>Archaea</taxon>
        <taxon>Methanobacteriati</taxon>
        <taxon>Methanobacteriota</taxon>
        <taxon>Methanomada group</taxon>
        <taxon>Methanococci</taxon>
        <taxon>Methanococcales</taxon>
        <taxon>Methanocaldococcaceae</taxon>
        <taxon>Methanocaldococcus</taxon>
    </lineage>
</organism>
<protein>
    <recommendedName>
        <fullName>Uncharacterized protein MJ1516</fullName>
    </recommendedName>
</protein>
<sequence length="99" mass="11483">MMAMNEIELMQIKDFVKDMDKNQRIVYYEQKKKSVGIAVLLSFIIPGAGQMYLGRVGKGIILLLTCWLIIPWIYSIYDAYKSAKDYNAQLYSIIFSKDD</sequence>
<reference key="1">
    <citation type="journal article" date="1996" name="Science">
        <title>Complete genome sequence of the methanogenic archaeon, Methanococcus jannaschii.</title>
        <authorList>
            <person name="Bult C.J."/>
            <person name="White O."/>
            <person name="Olsen G.J."/>
            <person name="Zhou L."/>
            <person name="Fleischmann R.D."/>
            <person name="Sutton G.G."/>
            <person name="Blake J.A."/>
            <person name="FitzGerald L.M."/>
            <person name="Clayton R.A."/>
            <person name="Gocayne J.D."/>
            <person name="Kerlavage A.R."/>
            <person name="Dougherty B.A."/>
            <person name="Tomb J.-F."/>
            <person name="Adams M.D."/>
            <person name="Reich C.I."/>
            <person name="Overbeek R."/>
            <person name="Kirkness E.F."/>
            <person name="Weinstock K.G."/>
            <person name="Merrick J.M."/>
            <person name="Glodek A."/>
            <person name="Scott J.L."/>
            <person name="Geoghagen N.S.M."/>
            <person name="Weidman J.F."/>
            <person name="Fuhrmann J.L."/>
            <person name="Nguyen D."/>
            <person name="Utterback T.R."/>
            <person name="Kelley J.M."/>
            <person name="Peterson J.D."/>
            <person name="Sadow P.W."/>
            <person name="Hanna M.C."/>
            <person name="Cotton M.D."/>
            <person name="Roberts K.M."/>
            <person name="Hurst M.A."/>
            <person name="Kaine B.P."/>
            <person name="Borodovsky M."/>
            <person name="Klenk H.-P."/>
            <person name="Fraser C.M."/>
            <person name="Smith H.O."/>
            <person name="Woese C.R."/>
            <person name="Venter J.C."/>
        </authorList>
    </citation>
    <scope>NUCLEOTIDE SEQUENCE [LARGE SCALE GENOMIC DNA]</scope>
    <source>
        <strain>ATCC 43067 / DSM 2661 / JAL-1 / JCM 10045 / NBRC 100440</strain>
    </source>
</reference>
<accession>Q58911</accession>
<comment type="subcellular location">
    <subcellularLocation>
        <location evidence="2">Cell membrane</location>
        <topology evidence="2">Multi-pass membrane protein</topology>
    </subcellularLocation>
</comment>
<evidence type="ECO:0000255" key="1"/>
<evidence type="ECO:0000305" key="2"/>